<gene>
    <name type="primary">RHBG</name>
</gene>
<comment type="function">
    <text evidence="2">Ammonium transporter involved in the maintenance of acid-base homeostasis. Transports ammonium and its related derivative methylammonium across the basolateral plasma membrane of epithelial cells likely contributing to renal transepithelial ammonia transport and ammonia metabolism. May transport either NH4(+) or NH3 ammonia species predominantly mediating an electrogenic NH4(+) transport. May act as a CO2 channel providing for renal acid secretion.</text>
</comment>
<comment type="catalytic activity">
    <reaction evidence="2">
        <text>NH4(+)(in) = NH4(+)(out)</text>
        <dbReference type="Rhea" id="RHEA:28747"/>
        <dbReference type="ChEBI" id="CHEBI:28938"/>
    </reaction>
    <physiologicalReaction direction="left-to-right" evidence="2">
        <dbReference type="Rhea" id="RHEA:28748"/>
    </physiologicalReaction>
    <physiologicalReaction direction="right-to-left" evidence="2">
        <dbReference type="Rhea" id="RHEA:28749"/>
    </physiologicalReaction>
</comment>
<comment type="catalytic activity">
    <reaction evidence="2">
        <text>methylamine(out) = methylamine(in)</text>
        <dbReference type="Rhea" id="RHEA:74391"/>
        <dbReference type="ChEBI" id="CHEBI:59338"/>
    </reaction>
    <physiologicalReaction direction="left-to-right" evidence="2">
        <dbReference type="Rhea" id="RHEA:74392"/>
    </physiologicalReaction>
</comment>
<comment type="catalytic activity">
    <reaction evidence="2">
        <text>CO2(out) = CO2(in)</text>
        <dbReference type="Rhea" id="RHEA:74891"/>
        <dbReference type="ChEBI" id="CHEBI:16526"/>
    </reaction>
    <physiologicalReaction direction="left-to-right" evidence="2">
        <dbReference type="Rhea" id="RHEA:74892"/>
    </physiologicalReaction>
</comment>
<comment type="subunit">
    <text evidence="2">Interacts (via C-terminus) with ANK2 and ANK3; required for targeting to the basolateral membrane.</text>
</comment>
<comment type="subcellular location">
    <subcellularLocation>
        <location evidence="2">Cell membrane</location>
        <topology evidence="2">Multi-pass membrane protein</topology>
    </subcellularLocation>
    <subcellularLocation>
        <location evidence="2">Basolateral cell membrane</location>
        <topology evidence="3">Multi-pass membrane protein</topology>
    </subcellularLocation>
</comment>
<comment type="PTM">
    <text evidence="1">N-glycosylated.</text>
</comment>
<comment type="similarity">
    <text evidence="5">Belongs to the ammonium transporter (TC 2.A.49) family. Rh subfamily.</text>
</comment>
<sequence>MAGSPSRAAGRRLQLPLLCLFLQGATAVLFAVFVRYNHKTDAALWHRGNHSNADNEFYFRYPSFQDVHAMVFVGFGFLMVFLQRYGFSSVGFTFLLAAFALQWSTLVQGFLHSFHSGHIHVGVESMINADFCAGAVLISFGAVLGKTGPAQLLLMALLEVVLFGINEFVLLHLLGVRDAGGSMTIHTFGAYFGLVLSRVLYRPQLEKSKHRQGSVYHSDLFAMIGTIFLWIFWPSFNSALTALGAGQHRTALNTYYSLAASTLGTFALSALVGEDGRLDMVHIQNAALAGGVVVGTSSEMMLTPFGALAAGFLAGTVSTLGYKFFTPILESKFKVQDTCGVHNLHGMPGVLGALLGVLVAGLATHEAYGDGLESVFPLIAEGQRSATSQAMLQLFGLFVTLMFASVGGGLGGLLLKLPFLDSPPDSQCYEDQVHWQVPGEHEDEAQRPLRVEEADTQA</sequence>
<keyword id="KW-0924">Ammonia transport</keyword>
<keyword id="KW-1003">Cell membrane</keyword>
<keyword id="KW-0325">Glycoprotein</keyword>
<keyword id="KW-0472">Membrane</keyword>
<keyword id="KW-1185">Reference proteome</keyword>
<keyword id="KW-0812">Transmembrane</keyword>
<keyword id="KW-1133">Transmembrane helix</keyword>
<keyword id="KW-0813">Transport</keyword>
<proteinExistence type="inferred from homology"/>
<reference key="1">
    <citation type="journal article" date="2005" name="Proc. Natl. Acad. Sci. U.S.A.">
        <title>Evolutionary conservation and diversification of Rh family genes and proteins.</title>
        <authorList>
            <person name="Huang C.-H."/>
            <person name="Peng J."/>
        </authorList>
    </citation>
    <scope>NUCLEOTIDE SEQUENCE [GENOMIC DNA]</scope>
</reference>
<feature type="chain" id="PRO_0000283598" description="Ammonium transporter Rh type B">
    <location>
        <begin position="1"/>
        <end position="458"/>
    </location>
</feature>
<feature type="topological domain" description="Cytoplasmic" evidence="3">
    <location>
        <begin position="1"/>
        <end position="13"/>
    </location>
</feature>
<feature type="transmembrane region" description="Helical" evidence="3">
    <location>
        <begin position="14"/>
        <end position="34"/>
    </location>
</feature>
<feature type="topological domain" description="Extracellular" evidence="3">
    <location>
        <begin position="35"/>
        <end position="61"/>
    </location>
</feature>
<feature type="transmembrane region" description="Helical" evidence="3">
    <location>
        <begin position="62"/>
        <end position="82"/>
    </location>
</feature>
<feature type="topological domain" description="Cytoplasmic" evidence="3">
    <location>
        <begin position="83"/>
        <end position="86"/>
    </location>
</feature>
<feature type="transmembrane region" description="Helical" evidence="3">
    <location>
        <begin position="87"/>
        <end position="107"/>
    </location>
</feature>
<feature type="topological domain" description="Extracellular" evidence="3">
    <location>
        <begin position="108"/>
        <end position="124"/>
    </location>
</feature>
<feature type="transmembrane region" description="Helical" evidence="3">
    <location>
        <begin position="125"/>
        <end position="145"/>
    </location>
</feature>
<feature type="topological domain" description="Cytoplasmic" evidence="3">
    <location>
        <begin position="146"/>
        <end position="149"/>
    </location>
</feature>
<feature type="transmembrane region" description="Helical" evidence="3">
    <location>
        <begin position="150"/>
        <end position="170"/>
    </location>
</feature>
<feature type="topological domain" description="Extracellular" evidence="3">
    <location>
        <begin position="171"/>
        <end position="178"/>
    </location>
</feature>
<feature type="transmembrane region" description="Helical" evidence="3">
    <location>
        <begin position="179"/>
        <end position="201"/>
    </location>
</feature>
<feature type="topological domain" description="Cytoplasmic" evidence="3">
    <location>
        <begin position="202"/>
        <end position="219"/>
    </location>
</feature>
<feature type="transmembrane region" description="Helical" evidence="3">
    <location>
        <begin position="220"/>
        <end position="240"/>
    </location>
</feature>
<feature type="topological domain" description="Extracellular" evidence="3">
    <location>
        <begin position="241"/>
        <end position="251"/>
    </location>
</feature>
<feature type="transmembrane region" description="Helical" evidence="3">
    <location>
        <begin position="252"/>
        <end position="272"/>
    </location>
</feature>
<feature type="topological domain" description="Cytoplasmic" evidence="3">
    <location>
        <begin position="273"/>
        <end position="282"/>
    </location>
</feature>
<feature type="transmembrane region" description="Helical" evidence="3">
    <location>
        <begin position="283"/>
        <end position="303"/>
    </location>
</feature>
<feature type="topological domain" description="Extracellular" evidence="3">
    <location>
        <position position="304"/>
    </location>
</feature>
<feature type="transmembrane region" description="Helical" evidence="3">
    <location>
        <begin position="305"/>
        <end position="325"/>
    </location>
</feature>
<feature type="topological domain" description="Cytoplasmic" evidence="3">
    <location>
        <begin position="326"/>
        <end position="346"/>
    </location>
</feature>
<feature type="transmembrane region" description="Helical" evidence="3">
    <location>
        <begin position="347"/>
        <end position="367"/>
    </location>
</feature>
<feature type="topological domain" description="Extracellular" evidence="3">
    <location>
        <begin position="368"/>
        <end position="393"/>
    </location>
</feature>
<feature type="transmembrane region" description="Helical" evidence="3">
    <location>
        <begin position="394"/>
        <end position="414"/>
    </location>
</feature>
<feature type="topological domain" description="Cytoplasmic" evidence="3">
    <location>
        <begin position="415"/>
        <end position="458"/>
    </location>
</feature>
<feature type="region of interest" description="Interaction with ANK3" evidence="1">
    <location>
        <begin position="416"/>
        <end position="424"/>
    </location>
</feature>
<feature type="region of interest" description="Disordered" evidence="4">
    <location>
        <begin position="439"/>
        <end position="458"/>
    </location>
</feature>
<feature type="short sequence motif" description="Basolateral sorting signal" evidence="1">
    <location>
        <begin position="429"/>
        <end position="432"/>
    </location>
</feature>
<feature type="compositionally biased region" description="Basic and acidic residues" evidence="4">
    <location>
        <begin position="444"/>
        <end position="458"/>
    </location>
</feature>
<feature type="glycosylation site" description="N-linked (GlcNAc...) asparagine" evidence="3">
    <location>
        <position position="49"/>
    </location>
</feature>
<accession>Q8WNQ6</accession>
<evidence type="ECO:0000250" key="1"/>
<evidence type="ECO:0000250" key="2">
    <source>
        <dbReference type="UniProtKB" id="Q9H310"/>
    </source>
</evidence>
<evidence type="ECO:0000255" key="3"/>
<evidence type="ECO:0000256" key="4">
    <source>
        <dbReference type="SAM" id="MobiDB-lite"/>
    </source>
</evidence>
<evidence type="ECO:0000305" key="5"/>
<organism>
    <name type="scientific">Macaca mulatta</name>
    <name type="common">Rhesus macaque</name>
    <dbReference type="NCBI Taxonomy" id="9544"/>
    <lineage>
        <taxon>Eukaryota</taxon>
        <taxon>Metazoa</taxon>
        <taxon>Chordata</taxon>
        <taxon>Craniata</taxon>
        <taxon>Vertebrata</taxon>
        <taxon>Euteleostomi</taxon>
        <taxon>Mammalia</taxon>
        <taxon>Eutheria</taxon>
        <taxon>Euarchontoglires</taxon>
        <taxon>Primates</taxon>
        <taxon>Haplorrhini</taxon>
        <taxon>Catarrhini</taxon>
        <taxon>Cercopithecidae</taxon>
        <taxon>Cercopithecinae</taxon>
        <taxon>Macaca</taxon>
    </lineage>
</organism>
<name>RHBG_MACMU</name>
<protein>
    <recommendedName>
        <fullName>Ammonium transporter Rh type B</fullName>
    </recommendedName>
    <alternativeName>
        <fullName>Rhesus blood group family type B glycoprotein</fullName>
        <shortName>Rh family type B glycoprotein</shortName>
        <shortName>Rh type B glycoprotein</shortName>
    </alternativeName>
</protein>
<dbReference type="EMBL" id="AF327270">
    <property type="protein sequence ID" value="AAL56017.1"/>
    <property type="molecule type" value="Genomic_DNA"/>
</dbReference>
<dbReference type="EMBL" id="AF327267">
    <property type="protein sequence ID" value="AAL56017.1"/>
    <property type="status" value="JOINED"/>
    <property type="molecule type" value="Genomic_DNA"/>
</dbReference>
<dbReference type="EMBL" id="AF327268">
    <property type="protein sequence ID" value="AAL56017.1"/>
    <property type="status" value="JOINED"/>
    <property type="molecule type" value="Genomic_DNA"/>
</dbReference>
<dbReference type="EMBL" id="AF327269">
    <property type="protein sequence ID" value="AAL56017.1"/>
    <property type="status" value="JOINED"/>
    <property type="molecule type" value="Genomic_DNA"/>
</dbReference>
<dbReference type="RefSeq" id="NP_001035508.1">
    <property type="nucleotide sequence ID" value="NM_001040418.3"/>
</dbReference>
<dbReference type="SMR" id="Q8WNQ6"/>
<dbReference type="FunCoup" id="Q8WNQ6">
    <property type="interactions" value="47"/>
</dbReference>
<dbReference type="STRING" id="9544.ENSMMUP00000023615"/>
<dbReference type="GlyCosmos" id="Q8WNQ6">
    <property type="glycosylation" value="1 site, No reported glycans"/>
</dbReference>
<dbReference type="PaxDb" id="9544-ENSMMUP00000038722"/>
<dbReference type="Ensembl" id="ENSMMUT00000025242.4">
    <property type="protein sequence ID" value="ENSMMUP00000023615.2"/>
    <property type="gene ID" value="ENSMMUG00000017965.4"/>
</dbReference>
<dbReference type="GeneID" id="692069"/>
<dbReference type="KEGG" id="mcc:692069"/>
<dbReference type="CTD" id="57127"/>
<dbReference type="VEuPathDB" id="HostDB:ENSMMUG00000017965"/>
<dbReference type="VGNC" id="VGNC:99814">
    <property type="gene designation" value="RHBG"/>
</dbReference>
<dbReference type="eggNOG" id="KOG3796">
    <property type="taxonomic scope" value="Eukaryota"/>
</dbReference>
<dbReference type="GeneTree" id="ENSGT00950000182844"/>
<dbReference type="HOGENOM" id="CLU_021386_0_0_1"/>
<dbReference type="InParanoid" id="Q8WNQ6"/>
<dbReference type="OMA" id="DNIYWEV"/>
<dbReference type="OrthoDB" id="534912at2759"/>
<dbReference type="Proteomes" id="UP000006718">
    <property type="component" value="Chromosome 1"/>
</dbReference>
<dbReference type="Bgee" id="ENSMMUG00000017965">
    <property type="expression patterns" value="Expressed in adult mammalian kidney and 3 other cell types or tissues"/>
</dbReference>
<dbReference type="GO" id="GO:0016323">
    <property type="term" value="C:basolateral plasma membrane"/>
    <property type="evidence" value="ECO:0000250"/>
    <property type="project" value="UniProtKB"/>
</dbReference>
<dbReference type="GO" id="GO:0005886">
    <property type="term" value="C:plasma membrane"/>
    <property type="evidence" value="ECO:0000318"/>
    <property type="project" value="GO_Central"/>
</dbReference>
<dbReference type="GO" id="GO:0014731">
    <property type="term" value="C:spectrin-associated cytoskeleton"/>
    <property type="evidence" value="ECO:0000250"/>
    <property type="project" value="UniProtKB"/>
</dbReference>
<dbReference type="GO" id="GO:0008519">
    <property type="term" value="F:ammonium channel activity"/>
    <property type="evidence" value="ECO:0000250"/>
    <property type="project" value="UniProtKB"/>
</dbReference>
<dbReference type="GO" id="GO:0030506">
    <property type="term" value="F:ankyrin binding"/>
    <property type="evidence" value="ECO:0007669"/>
    <property type="project" value="Ensembl"/>
</dbReference>
<dbReference type="GO" id="GO:0035379">
    <property type="term" value="F:carbon dioxide transmembrane transporter activity"/>
    <property type="evidence" value="ECO:0000250"/>
    <property type="project" value="UniProtKB"/>
</dbReference>
<dbReference type="GO" id="GO:0097272">
    <property type="term" value="P:ammonium homeostasis"/>
    <property type="evidence" value="ECO:0000318"/>
    <property type="project" value="GO_Central"/>
</dbReference>
<dbReference type="GO" id="GO:0072488">
    <property type="term" value="P:ammonium transmembrane transport"/>
    <property type="evidence" value="ECO:0000250"/>
    <property type="project" value="UniProtKB"/>
</dbReference>
<dbReference type="GO" id="GO:0070634">
    <property type="term" value="P:transepithelial ammonium transport"/>
    <property type="evidence" value="ECO:0007669"/>
    <property type="project" value="Ensembl"/>
</dbReference>
<dbReference type="FunFam" id="1.10.3430.10:FF:000001">
    <property type="entry name" value="Ammonium transporter Rh type C"/>
    <property type="match status" value="1"/>
</dbReference>
<dbReference type="Gene3D" id="1.10.3430.10">
    <property type="entry name" value="Ammonium transporter AmtB like domains"/>
    <property type="match status" value="1"/>
</dbReference>
<dbReference type="InterPro" id="IPR029020">
    <property type="entry name" value="Ammonium/urea_transptr"/>
</dbReference>
<dbReference type="InterPro" id="IPR024041">
    <property type="entry name" value="NH4_transpt_AmtB-like_dom"/>
</dbReference>
<dbReference type="InterPro" id="IPR002229">
    <property type="entry name" value="RhesusRHD"/>
</dbReference>
<dbReference type="PANTHER" id="PTHR11730">
    <property type="entry name" value="AMMONIUM TRANSPORTER"/>
    <property type="match status" value="1"/>
</dbReference>
<dbReference type="PANTHER" id="PTHR11730:SF42">
    <property type="entry name" value="AMMONIUM TRANSPORTER RH TYPE B"/>
    <property type="match status" value="1"/>
</dbReference>
<dbReference type="Pfam" id="PF00909">
    <property type="entry name" value="Ammonium_transp"/>
    <property type="match status" value="1"/>
</dbReference>
<dbReference type="PRINTS" id="PR00342">
    <property type="entry name" value="RHESUSRHD"/>
</dbReference>
<dbReference type="SUPFAM" id="SSF111352">
    <property type="entry name" value="Ammonium transporter"/>
    <property type="match status" value="1"/>
</dbReference>